<accession>P47110</accession>
<accession>D6VWL4</accession>
<gene>
    <name type="primary">POL32</name>
    <name type="ordered locus">YJR043C</name>
    <name type="ORF">J1626</name>
</gene>
<dbReference type="EMBL" id="L36344">
    <property type="protein sequence ID" value="AAA88745.1"/>
    <property type="molecule type" value="Genomic_DNA"/>
</dbReference>
<dbReference type="EMBL" id="Z49543">
    <property type="protein sequence ID" value="CAA89571.1"/>
    <property type="molecule type" value="Genomic_DNA"/>
</dbReference>
<dbReference type="EMBL" id="AY557918">
    <property type="protein sequence ID" value="AAS56244.1"/>
    <property type="molecule type" value="Genomic_DNA"/>
</dbReference>
<dbReference type="EMBL" id="BK006943">
    <property type="protein sequence ID" value="DAA08830.1"/>
    <property type="molecule type" value="Genomic_DNA"/>
</dbReference>
<dbReference type="PIR" id="S57062">
    <property type="entry name" value="S57062"/>
</dbReference>
<dbReference type="RefSeq" id="NP_012577.1">
    <property type="nucleotide sequence ID" value="NM_001181701.1"/>
</dbReference>
<dbReference type="PDB" id="6P1H">
    <property type="method" value="EM"/>
    <property type="resolution" value="3.20 A"/>
    <property type="chains" value="C=1-350"/>
</dbReference>
<dbReference type="PDB" id="6V8P">
    <property type="method" value="EM"/>
    <property type="resolution" value="4.10 A"/>
    <property type="chains" value="G=1-350"/>
</dbReference>
<dbReference type="PDB" id="6V93">
    <property type="method" value="EM"/>
    <property type="resolution" value="3.10 A"/>
    <property type="chains" value="G=1-350"/>
</dbReference>
<dbReference type="PDB" id="7KC0">
    <property type="method" value="EM"/>
    <property type="resolution" value="3.20 A"/>
    <property type="chains" value="C=8-350"/>
</dbReference>
<dbReference type="PDB" id="7LXD">
    <property type="method" value="EM"/>
    <property type="resolution" value="4.11 A"/>
    <property type="chains" value="G=1-350"/>
</dbReference>
<dbReference type="PDB" id="7S0T">
    <property type="method" value="EM"/>
    <property type="resolution" value="3.05 A"/>
    <property type="chains" value="G=1-350"/>
</dbReference>
<dbReference type="PDB" id="8TLQ">
    <property type="method" value="EM"/>
    <property type="resolution" value="3.53 A"/>
    <property type="chains" value="G=1-350"/>
</dbReference>
<dbReference type="PDB" id="8TLT">
    <property type="method" value="EM"/>
    <property type="resolution" value="2.85 A"/>
    <property type="chains" value="G=1-350"/>
</dbReference>
<dbReference type="PDBsum" id="6P1H"/>
<dbReference type="PDBsum" id="6V8P"/>
<dbReference type="PDBsum" id="6V93"/>
<dbReference type="PDBsum" id="7KC0"/>
<dbReference type="PDBsum" id="7LXD"/>
<dbReference type="PDBsum" id="7S0T"/>
<dbReference type="PDBsum" id="8TLQ"/>
<dbReference type="PDBsum" id="8TLT"/>
<dbReference type="EMDB" id="EMD-20235"/>
<dbReference type="EMDB" id="EMD-21108"/>
<dbReference type="EMDB" id="EMD-21115"/>
<dbReference type="EMDB" id="EMD-23570"/>
<dbReference type="EMDB" id="EMD-2409"/>
<dbReference type="EMDB" id="EMD-24793"/>
<dbReference type="EMDB" id="EMD-41371"/>
<dbReference type="EMDB" id="EMD-41372"/>
<dbReference type="SMR" id="P47110"/>
<dbReference type="BioGRID" id="33794">
    <property type="interactions" value="461"/>
</dbReference>
<dbReference type="ComplexPortal" id="CPX-1091">
    <property type="entry name" value="DNA polymerase zeta complex"/>
</dbReference>
<dbReference type="ComplexPortal" id="CPX-2101">
    <property type="entry name" value="DNA polymerase delta complex"/>
</dbReference>
<dbReference type="DIP" id="DIP-2523N"/>
<dbReference type="ELM" id="P47110"/>
<dbReference type="FunCoup" id="P47110">
    <property type="interactions" value="160"/>
</dbReference>
<dbReference type="IntAct" id="P47110">
    <property type="interactions" value="13"/>
</dbReference>
<dbReference type="MINT" id="P47110"/>
<dbReference type="STRING" id="4932.YJR043C"/>
<dbReference type="iPTMnet" id="P47110"/>
<dbReference type="PaxDb" id="4932-YJR043C"/>
<dbReference type="PeptideAtlas" id="P47110"/>
<dbReference type="EnsemblFungi" id="YJR043C_mRNA">
    <property type="protein sequence ID" value="YJR043C"/>
    <property type="gene ID" value="YJR043C"/>
</dbReference>
<dbReference type="GeneID" id="853500"/>
<dbReference type="KEGG" id="sce:YJR043C"/>
<dbReference type="AGR" id="SGD:S000003804"/>
<dbReference type="SGD" id="S000003804">
    <property type="gene designation" value="POL32"/>
</dbReference>
<dbReference type="VEuPathDB" id="FungiDB:YJR043C"/>
<dbReference type="eggNOG" id="ENOG502QW2D">
    <property type="taxonomic scope" value="Eukaryota"/>
</dbReference>
<dbReference type="HOGENOM" id="CLU_794694_0_0_1"/>
<dbReference type="InParanoid" id="P47110"/>
<dbReference type="OMA" id="DCFIYAF"/>
<dbReference type="OrthoDB" id="4036325at2759"/>
<dbReference type="BioCyc" id="YEAST:G3O-31678-MONOMER"/>
<dbReference type="BioGRID-ORCS" id="853500">
    <property type="hits" value="0 hits in 10 CRISPR screens"/>
</dbReference>
<dbReference type="PRO" id="PR:P47110"/>
<dbReference type="Proteomes" id="UP000002311">
    <property type="component" value="Chromosome X"/>
</dbReference>
<dbReference type="RNAct" id="P47110">
    <property type="molecule type" value="protein"/>
</dbReference>
<dbReference type="GO" id="GO:0043625">
    <property type="term" value="C:delta DNA polymerase complex"/>
    <property type="evidence" value="ECO:0000353"/>
    <property type="project" value="ComplexPortal"/>
</dbReference>
<dbReference type="GO" id="GO:0005634">
    <property type="term" value="C:nucleus"/>
    <property type="evidence" value="ECO:0007005"/>
    <property type="project" value="SGD"/>
</dbReference>
<dbReference type="GO" id="GO:0016035">
    <property type="term" value="C:zeta DNA polymerase complex"/>
    <property type="evidence" value="ECO:0000314"/>
    <property type="project" value="SGD"/>
</dbReference>
<dbReference type="GO" id="GO:0003887">
    <property type="term" value="F:DNA-directed DNA polymerase activity"/>
    <property type="evidence" value="ECO:0000314"/>
    <property type="project" value="SGD"/>
</dbReference>
<dbReference type="GO" id="GO:0000510">
    <property type="term" value="F:H3-H4 histone complex chaperone activity"/>
    <property type="evidence" value="ECO:0000314"/>
    <property type="project" value="SGD"/>
</dbReference>
<dbReference type="GO" id="GO:0006284">
    <property type="term" value="P:base-excision repair"/>
    <property type="evidence" value="ECO:0000304"/>
    <property type="project" value="SGD"/>
</dbReference>
<dbReference type="GO" id="GO:0006277">
    <property type="term" value="P:DNA amplification"/>
    <property type="evidence" value="ECO:0000315"/>
    <property type="project" value="SGD"/>
</dbReference>
<dbReference type="GO" id="GO:0006259">
    <property type="term" value="P:DNA metabolic process"/>
    <property type="evidence" value="ECO:0000314"/>
    <property type="project" value="ComplexPortal"/>
</dbReference>
<dbReference type="GO" id="GO:0043137">
    <property type="term" value="P:DNA replication, removal of RNA primer"/>
    <property type="evidence" value="ECO:0000314"/>
    <property type="project" value="SGD"/>
</dbReference>
<dbReference type="GO" id="GO:0000727">
    <property type="term" value="P:double-strand break repair via break-induced replication"/>
    <property type="evidence" value="ECO:0000315"/>
    <property type="project" value="SGD"/>
</dbReference>
<dbReference type="GO" id="GO:0042276">
    <property type="term" value="P:error-prone translesion synthesis"/>
    <property type="evidence" value="ECO:0000315"/>
    <property type="project" value="SGD"/>
</dbReference>
<dbReference type="GO" id="GO:0006273">
    <property type="term" value="P:lagging strand elongation"/>
    <property type="evidence" value="ECO:0000304"/>
    <property type="project" value="SGD"/>
</dbReference>
<dbReference type="GO" id="GO:0006272">
    <property type="term" value="P:leading strand elongation"/>
    <property type="evidence" value="ECO:0000304"/>
    <property type="project" value="SGD"/>
</dbReference>
<dbReference type="GO" id="GO:0006289">
    <property type="term" value="P:nucleotide-excision repair"/>
    <property type="evidence" value="ECO:0000304"/>
    <property type="project" value="SGD"/>
</dbReference>
<dbReference type="GO" id="GO:0006278">
    <property type="term" value="P:RNA-templated DNA biosynthetic process"/>
    <property type="evidence" value="ECO:0000314"/>
    <property type="project" value="SGD"/>
</dbReference>
<dbReference type="DisProt" id="DP02847"/>
<evidence type="ECO:0000250" key="1"/>
<evidence type="ECO:0000256" key="2">
    <source>
        <dbReference type="SAM" id="MobiDB-lite"/>
    </source>
</evidence>
<evidence type="ECO:0000269" key="3">
    <source>
    </source>
</evidence>
<evidence type="ECO:0007744" key="4">
    <source>
    </source>
</evidence>
<evidence type="ECO:0007829" key="5">
    <source>
        <dbReference type="PDB" id="7S0T"/>
    </source>
</evidence>
<evidence type="ECO:0007829" key="6">
    <source>
        <dbReference type="PDB" id="8TLT"/>
    </source>
</evidence>
<protein>
    <recommendedName>
        <fullName>DNA polymerase delta subunit 3</fullName>
    </recommendedName>
</protein>
<comment type="function">
    <text>DNA polymerase delta (DNA polymerase III) participates in chromosomal DNA replication. It is required during synthesis of the leading and lagging DNA strands at the replication fork and binds at/or near replication origins and moves along DNA with the replication fork. It has 3'-5' proofreading exonuclease activity that correct errors arising during DNA replication. It is also involved in DNA synthesis during DNA repair.</text>
</comment>
<comment type="subunit">
    <text>DNA polymerase delta is a heterotrimer of POL3, POL32 and HYS2. POL32 can form homodimers.</text>
</comment>
<comment type="interaction">
    <interactant intactId="EBI-6084">
        <id>P47110</id>
    </interactant>
    <interactant intactId="EBI-12993">
        <id>P15873</id>
        <label>POL30</label>
    </interactant>
    <organismsDiffer>false</organismsDiffer>
    <experiments>4</experiments>
</comment>
<comment type="interaction">
    <interactant intactId="EBI-6084">
        <id>P47110</id>
    </interactant>
    <interactant intactId="EBI-14951">
        <id>P12689</id>
        <label>REV1</label>
    </interactant>
    <organismsDiffer>false</organismsDiffer>
    <experiments>4</experiments>
</comment>
<comment type="subcellular location">
    <subcellularLocation>
        <location evidence="1">Nucleus</location>
    </subcellularLocation>
</comment>
<comment type="miscellaneous">
    <text evidence="3">Present with 2410 molecules/cell in log phase SD medium.</text>
</comment>
<reference key="1">
    <citation type="journal article" date="1995" name="Yeast">
        <title>Analysis of a 42.5 kb DNA sequence of chromosome X reveals three tRNA genes and 14 new open reading frames including a gene most probably belonging to the family of ubiquitin-protein ligases.</title>
        <authorList>
            <person name="Huang M.-E."/>
            <person name="Chuat J.-C."/>
            <person name="Galibert F."/>
        </authorList>
    </citation>
    <scope>NUCLEOTIDE SEQUENCE [GENOMIC DNA]</scope>
    <source>
        <strain>ATCC 204508 / S288c</strain>
    </source>
</reference>
<reference key="2">
    <citation type="journal article" date="1996" name="EMBO J.">
        <title>Complete nucleotide sequence of Saccharomyces cerevisiae chromosome X.</title>
        <authorList>
            <person name="Galibert F."/>
            <person name="Alexandraki D."/>
            <person name="Baur A."/>
            <person name="Boles E."/>
            <person name="Chalwatzis N."/>
            <person name="Chuat J.-C."/>
            <person name="Coster F."/>
            <person name="Cziepluch C."/>
            <person name="de Haan M."/>
            <person name="Domdey H."/>
            <person name="Durand P."/>
            <person name="Entian K.-D."/>
            <person name="Gatius M."/>
            <person name="Goffeau A."/>
            <person name="Grivell L.A."/>
            <person name="Hennemann A."/>
            <person name="Herbert C.J."/>
            <person name="Heumann K."/>
            <person name="Hilger F."/>
            <person name="Hollenberg C.P."/>
            <person name="Huang M.-E."/>
            <person name="Jacq C."/>
            <person name="Jauniaux J.-C."/>
            <person name="Katsoulou C."/>
            <person name="Kirchrath L."/>
            <person name="Kleine K."/>
            <person name="Kordes E."/>
            <person name="Koetter P."/>
            <person name="Liebl S."/>
            <person name="Louis E.J."/>
            <person name="Manus V."/>
            <person name="Mewes H.-W."/>
            <person name="Miosga T."/>
            <person name="Obermaier B."/>
            <person name="Perea J."/>
            <person name="Pohl T.M."/>
            <person name="Portetelle D."/>
            <person name="Pujol A."/>
            <person name="Purnelle B."/>
            <person name="Ramezani Rad M."/>
            <person name="Rasmussen S.W."/>
            <person name="Rose M."/>
            <person name="Rossau R."/>
            <person name="Schaaff-Gerstenschlaeger I."/>
            <person name="Smits P.H.M."/>
            <person name="Scarcez T."/>
            <person name="Soriano N."/>
            <person name="To Van D."/>
            <person name="Tzermia M."/>
            <person name="Van Broekhoven A."/>
            <person name="Vandenbol M."/>
            <person name="Wedler H."/>
            <person name="von Wettstein D."/>
            <person name="Wambutt R."/>
            <person name="Zagulski M."/>
            <person name="Zollner A."/>
            <person name="Karpfinger-Hartl L."/>
        </authorList>
    </citation>
    <scope>NUCLEOTIDE SEQUENCE [LARGE SCALE GENOMIC DNA]</scope>
    <source>
        <strain>ATCC 204508 / S288c</strain>
    </source>
</reference>
<reference key="3">
    <citation type="journal article" date="2014" name="G3 (Bethesda)">
        <title>The reference genome sequence of Saccharomyces cerevisiae: Then and now.</title>
        <authorList>
            <person name="Engel S.R."/>
            <person name="Dietrich F.S."/>
            <person name="Fisk D.G."/>
            <person name="Binkley G."/>
            <person name="Balakrishnan R."/>
            <person name="Costanzo M.C."/>
            <person name="Dwight S.S."/>
            <person name="Hitz B.C."/>
            <person name="Karra K."/>
            <person name="Nash R.S."/>
            <person name="Weng S."/>
            <person name="Wong E.D."/>
            <person name="Lloyd P."/>
            <person name="Skrzypek M.S."/>
            <person name="Miyasato S.R."/>
            <person name="Simison M."/>
            <person name="Cherry J.M."/>
        </authorList>
    </citation>
    <scope>GENOME REANNOTATION</scope>
    <source>
        <strain>ATCC 204508 / S288c</strain>
    </source>
</reference>
<reference key="4">
    <citation type="journal article" date="2007" name="Genome Res.">
        <title>Approaching a complete repository of sequence-verified protein-encoding clones for Saccharomyces cerevisiae.</title>
        <authorList>
            <person name="Hu Y."/>
            <person name="Rolfs A."/>
            <person name="Bhullar B."/>
            <person name="Murthy T.V.S."/>
            <person name="Zhu C."/>
            <person name="Berger M.F."/>
            <person name="Camargo A.A."/>
            <person name="Kelley F."/>
            <person name="McCarron S."/>
            <person name="Jepson D."/>
            <person name="Richardson A."/>
            <person name="Raphael J."/>
            <person name="Moreira D."/>
            <person name="Taycher E."/>
            <person name="Zuo D."/>
            <person name="Mohr S."/>
            <person name="Kane M.F."/>
            <person name="Williamson J."/>
            <person name="Simpson A.J.G."/>
            <person name="Bulyk M.L."/>
            <person name="Harlow E."/>
            <person name="Marsischky G."/>
            <person name="Kolodner R.D."/>
            <person name="LaBaer J."/>
        </authorList>
    </citation>
    <scope>NUCLEOTIDE SEQUENCE [GENOMIC DNA]</scope>
    <source>
        <strain>ATCC 204508 / S288c</strain>
    </source>
</reference>
<reference key="5">
    <citation type="journal article" date="1998" name="J. Biol. Chem.">
        <title>Characterization of the two small subunits of Saccharomyces cerevisiae DNA polymerase delta.</title>
        <authorList>
            <person name="Gerik K.J."/>
            <person name="Li X."/>
            <person name="Pautz A."/>
            <person name="Burgers P.M."/>
        </authorList>
    </citation>
    <scope>CHARACTERIZATION</scope>
</reference>
<reference key="6">
    <citation type="journal article" date="2001" name="J. Biol. Chem.">
        <title>Structure of DNA polymerase delta from Saccharomyces cerevisiae.</title>
        <authorList>
            <person name="Johansson E."/>
            <person name="Majka J."/>
            <person name="Burgers P.M."/>
        </authorList>
    </citation>
    <scope>COMPOSITION OF THE DNA POLYMERASE DELTA COMPLEX</scope>
</reference>
<reference key="7">
    <citation type="journal article" date="2003" name="Nature">
        <title>Global analysis of protein expression in yeast.</title>
        <authorList>
            <person name="Ghaemmaghami S."/>
            <person name="Huh W.-K."/>
            <person name="Bower K."/>
            <person name="Howson R.W."/>
            <person name="Belle A."/>
            <person name="Dephoure N."/>
            <person name="O'Shea E.K."/>
            <person name="Weissman J.S."/>
        </authorList>
    </citation>
    <scope>LEVEL OF PROTEIN EXPRESSION [LARGE SCALE ANALYSIS]</scope>
</reference>
<reference key="8">
    <citation type="journal article" date="2007" name="Proc. Natl. Acad. Sci. U.S.A.">
        <title>Analysis of phosphorylation sites on proteins from Saccharomyces cerevisiae by electron transfer dissociation (ETD) mass spectrometry.</title>
        <authorList>
            <person name="Chi A."/>
            <person name="Huttenhower C."/>
            <person name="Geer L.Y."/>
            <person name="Coon J.J."/>
            <person name="Syka J.E.P."/>
            <person name="Bai D.L."/>
            <person name="Shabanowitz J."/>
            <person name="Burke D.J."/>
            <person name="Troyanskaya O.G."/>
            <person name="Hunt D.F."/>
        </authorList>
    </citation>
    <scope>IDENTIFICATION BY MASS SPECTROMETRY [LARGE SCALE ANALYSIS]</scope>
</reference>
<reference key="9">
    <citation type="journal article" date="2008" name="Mol. Cell. Proteomics">
        <title>A multidimensional chromatography technology for in-depth phosphoproteome analysis.</title>
        <authorList>
            <person name="Albuquerque C.P."/>
            <person name="Smolka M.B."/>
            <person name="Payne S.H."/>
            <person name="Bafna V."/>
            <person name="Eng J."/>
            <person name="Zhou H."/>
        </authorList>
    </citation>
    <scope>IDENTIFICATION BY MASS SPECTROMETRY [LARGE SCALE ANALYSIS]</scope>
</reference>
<reference key="10">
    <citation type="journal article" date="2009" name="Science">
        <title>Global analysis of Cdk1 substrate phosphorylation sites provides insights into evolution.</title>
        <authorList>
            <person name="Holt L.J."/>
            <person name="Tuch B.B."/>
            <person name="Villen J."/>
            <person name="Johnson A.D."/>
            <person name="Gygi S.P."/>
            <person name="Morgan D.O."/>
        </authorList>
    </citation>
    <scope>PHOSPHORYLATION [LARGE SCALE ANALYSIS] AT THR-223 AND SER-230</scope>
    <scope>IDENTIFICATION BY MASS SPECTROMETRY [LARGE SCALE ANALYSIS]</scope>
</reference>
<feature type="chain" id="PRO_0000186050" description="DNA polymerase delta subunit 3">
    <location>
        <begin position="1"/>
        <end position="350"/>
    </location>
</feature>
<feature type="region of interest" description="Disordered" evidence="2">
    <location>
        <begin position="131"/>
        <end position="350"/>
    </location>
</feature>
<feature type="compositionally biased region" description="Basic and acidic residues" evidence="2">
    <location>
        <begin position="146"/>
        <end position="162"/>
    </location>
</feature>
<feature type="compositionally biased region" description="Basic and acidic residues" evidence="2">
    <location>
        <begin position="172"/>
        <end position="195"/>
    </location>
</feature>
<feature type="compositionally biased region" description="Basic and acidic residues" evidence="2">
    <location>
        <begin position="234"/>
        <end position="248"/>
    </location>
</feature>
<feature type="compositionally biased region" description="Acidic residues" evidence="2">
    <location>
        <begin position="249"/>
        <end position="262"/>
    </location>
</feature>
<feature type="compositionally biased region" description="Basic and acidic residues" evidence="2">
    <location>
        <begin position="274"/>
        <end position="286"/>
    </location>
</feature>
<feature type="compositionally biased region" description="Polar residues" evidence="2">
    <location>
        <begin position="320"/>
        <end position="332"/>
    </location>
</feature>
<feature type="modified residue" description="Phosphothreonine" evidence="4">
    <location>
        <position position="223"/>
    </location>
</feature>
<feature type="modified residue" description="Phosphoserine" evidence="4">
    <location>
        <position position="230"/>
    </location>
</feature>
<feature type="turn" evidence="6">
    <location>
        <begin position="2"/>
        <end position="4"/>
    </location>
</feature>
<feature type="helix" evidence="6">
    <location>
        <begin position="5"/>
        <end position="14"/>
    </location>
</feature>
<feature type="helix" evidence="6">
    <location>
        <begin position="22"/>
        <end position="29"/>
    </location>
</feature>
<feature type="helix" evidence="6">
    <location>
        <begin position="33"/>
        <end position="44"/>
    </location>
</feature>
<feature type="strand" evidence="6">
    <location>
        <begin position="52"/>
        <end position="60"/>
    </location>
</feature>
<feature type="turn" evidence="5">
    <location>
        <begin position="61"/>
        <end position="63"/>
    </location>
</feature>
<feature type="strand" evidence="6">
    <location>
        <begin position="64"/>
        <end position="67"/>
    </location>
</feature>
<feature type="strand" evidence="6">
    <location>
        <begin position="70"/>
        <end position="72"/>
    </location>
</feature>
<feature type="helix" evidence="6">
    <location>
        <begin position="77"/>
        <end position="79"/>
    </location>
</feature>
<feature type="strand" evidence="6">
    <location>
        <begin position="80"/>
        <end position="92"/>
    </location>
</feature>
<feature type="strand" evidence="6">
    <location>
        <begin position="108"/>
        <end position="110"/>
    </location>
</feature>
<sequence>MDQKASYFINEKLFTEVKPVLFTDLIHHLKIGPSMAKKLMFDYYKQTTNAKYNCVVICCYKDQTIKIIHDLSNIPQQDSIIDCFIYAFNPMDSFIPYYDIIDQKDCLTIKNSYELKVSESSKIIERTKTLEEKSKPLVRPTARSKTTPEETTGRKSKSKDMGLRSTALLAKMKKDRDDKETSRQNELRKRKEENLQKINKQNPEREAQMKELNNLFVEDDLDTEEVNGGSKPNSPKETDSNDKDKNNDDLEDLLETTAEDSLMDVPKIQQTKPSETEHSKEPKSEEEPSSFIDEDGYIVTKRPATSTPPRKPSPVVKRALSSSKKQETPSSNKRLKKQGTLESFFKRKAK</sequence>
<proteinExistence type="evidence at protein level"/>
<keyword id="KW-0002">3D-structure</keyword>
<keyword id="KW-0235">DNA replication</keyword>
<keyword id="KW-0239">DNA-directed DNA polymerase</keyword>
<keyword id="KW-0548">Nucleotidyltransferase</keyword>
<keyword id="KW-0539">Nucleus</keyword>
<keyword id="KW-0597">Phosphoprotein</keyword>
<keyword id="KW-1185">Reference proteome</keyword>
<keyword id="KW-0808">Transferase</keyword>
<name>DPOD3_YEAST</name>
<organism>
    <name type="scientific">Saccharomyces cerevisiae (strain ATCC 204508 / S288c)</name>
    <name type="common">Baker's yeast</name>
    <dbReference type="NCBI Taxonomy" id="559292"/>
    <lineage>
        <taxon>Eukaryota</taxon>
        <taxon>Fungi</taxon>
        <taxon>Dikarya</taxon>
        <taxon>Ascomycota</taxon>
        <taxon>Saccharomycotina</taxon>
        <taxon>Saccharomycetes</taxon>
        <taxon>Saccharomycetales</taxon>
        <taxon>Saccharomycetaceae</taxon>
        <taxon>Saccharomyces</taxon>
    </lineage>
</organism>